<dbReference type="EMBL" id="AB240139">
    <property type="protein sequence ID" value="BAE47980.1"/>
    <property type="molecule type" value="Genomic_DNA"/>
</dbReference>
<dbReference type="RefSeq" id="YP_398842.1">
    <property type="nucleotide sequence ID" value="NC_007602.1"/>
</dbReference>
<dbReference type="SMR" id="Q33C55"/>
<dbReference type="GeneID" id="3776374"/>
<dbReference type="KEGG" id="nto:3776374"/>
<dbReference type="OrthoDB" id="564007at2759"/>
<dbReference type="GO" id="GO:0009535">
    <property type="term" value="C:chloroplast thylakoid membrane"/>
    <property type="evidence" value="ECO:0007669"/>
    <property type="project" value="UniProtKB-SubCell"/>
</dbReference>
<dbReference type="GO" id="GO:0009539">
    <property type="term" value="C:photosystem II reaction center"/>
    <property type="evidence" value="ECO:0007669"/>
    <property type="project" value="InterPro"/>
</dbReference>
<dbReference type="GO" id="GO:0015979">
    <property type="term" value="P:photosynthesis"/>
    <property type="evidence" value="ECO:0007669"/>
    <property type="project" value="UniProtKB-UniRule"/>
</dbReference>
<dbReference type="HAMAP" id="MF_01316">
    <property type="entry name" value="PSII_PsbI"/>
    <property type="match status" value="1"/>
</dbReference>
<dbReference type="InterPro" id="IPR003686">
    <property type="entry name" value="PSII_PsbI"/>
</dbReference>
<dbReference type="InterPro" id="IPR037271">
    <property type="entry name" value="PSII_PsbI_sf"/>
</dbReference>
<dbReference type="NCBIfam" id="NF002735">
    <property type="entry name" value="PRK02655.1"/>
    <property type="match status" value="1"/>
</dbReference>
<dbReference type="PANTHER" id="PTHR35772">
    <property type="entry name" value="PHOTOSYSTEM II REACTION CENTER PROTEIN I"/>
    <property type="match status" value="1"/>
</dbReference>
<dbReference type="PANTHER" id="PTHR35772:SF1">
    <property type="entry name" value="PHOTOSYSTEM II REACTION CENTER PROTEIN I"/>
    <property type="match status" value="1"/>
</dbReference>
<dbReference type="Pfam" id="PF02532">
    <property type="entry name" value="PsbI"/>
    <property type="match status" value="1"/>
</dbReference>
<dbReference type="SUPFAM" id="SSF161041">
    <property type="entry name" value="Photosystem II reaction center protein I, PsbI"/>
    <property type="match status" value="1"/>
</dbReference>
<gene>
    <name evidence="1" type="primary">psbI</name>
</gene>
<evidence type="ECO:0000255" key="1">
    <source>
        <dbReference type="HAMAP-Rule" id="MF_01316"/>
    </source>
</evidence>
<protein>
    <recommendedName>
        <fullName evidence="1">Photosystem II reaction center protein I</fullName>
        <shortName evidence="1">PSII-I</shortName>
    </recommendedName>
    <alternativeName>
        <fullName evidence="1">PSII 4.8 kDa protein</fullName>
    </alternativeName>
</protein>
<geneLocation type="chloroplast"/>
<accession>Q33C55</accession>
<proteinExistence type="inferred from homology"/>
<comment type="function">
    <text evidence="1">One of the components of the core complex of photosystem II (PSII), required for its stability and/or assembly. PSII is a light-driven water:plastoquinone oxidoreductase that uses light energy to abstract electrons from H(2)O, generating O(2) and a proton gradient subsequently used for ATP formation. It consists of a core antenna complex that captures photons, and an electron transfer chain that converts photonic excitation into a charge separation.</text>
</comment>
<comment type="subunit">
    <text evidence="1">PSII is composed of 1 copy each of membrane proteins PsbA, PsbB, PsbC, PsbD, PsbE, PsbF, PsbH, PsbI, PsbJ, PsbK, PsbL, PsbM, PsbT, PsbX, PsbY, PsbZ, Psb30/Ycf12, at least 3 peripheral proteins of the oxygen-evolving complex and a large number of cofactors. It forms dimeric complexes.</text>
</comment>
<comment type="subcellular location">
    <subcellularLocation>
        <location evidence="1">Plastid</location>
        <location evidence="1">Chloroplast thylakoid membrane</location>
        <topology evidence="1">Single-pass membrane protein</topology>
    </subcellularLocation>
</comment>
<comment type="similarity">
    <text evidence="1">Belongs to the PsbI family.</text>
</comment>
<organism>
    <name type="scientific">Nicotiana tomentosiformis</name>
    <name type="common">Tobacco</name>
    <dbReference type="NCBI Taxonomy" id="4098"/>
    <lineage>
        <taxon>Eukaryota</taxon>
        <taxon>Viridiplantae</taxon>
        <taxon>Streptophyta</taxon>
        <taxon>Embryophyta</taxon>
        <taxon>Tracheophyta</taxon>
        <taxon>Spermatophyta</taxon>
        <taxon>Magnoliopsida</taxon>
        <taxon>eudicotyledons</taxon>
        <taxon>Gunneridae</taxon>
        <taxon>Pentapetalae</taxon>
        <taxon>asterids</taxon>
        <taxon>lamiids</taxon>
        <taxon>Solanales</taxon>
        <taxon>Solanaceae</taxon>
        <taxon>Nicotianoideae</taxon>
        <taxon>Nicotianeae</taxon>
        <taxon>Nicotiana</taxon>
    </lineage>
</organism>
<name>PSBI_NICTO</name>
<sequence>MLTLKLFVYTVVIFFVSLFIFGFLSNDPGRNPGREE</sequence>
<reference key="1">
    <citation type="journal article" date="2006" name="Mol. Genet. Genomics">
        <title>The chloroplast genome of Nicotiana sylvestris and Nicotiana tomentosiformis: complete sequencing confirms that the Nicotiana sylvestris progenitor is the maternal genome donor of Nicotiana tabacum.</title>
        <authorList>
            <person name="Yukawa M."/>
            <person name="Tsudzuki T."/>
            <person name="Sugiura M."/>
        </authorList>
    </citation>
    <scope>NUCLEOTIDE SEQUENCE [LARGE SCALE GENOMIC DNA]</scope>
</reference>
<keyword id="KW-0150">Chloroplast</keyword>
<keyword id="KW-0472">Membrane</keyword>
<keyword id="KW-0602">Photosynthesis</keyword>
<keyword id="KW-0604">Photosystem II</keyword>
<keyword id="KW-0934">Plastid</keyword>
<keyword id="KW-0674">Reaction center</keyword>
<keyword id="KW-0793">Thylakoid</keyword>
<keyword id="KW-0812">Transmembrane</keyword>
<keyword id="KW-1133">Transmembrane helix</keyword>
<feature type="chain" id="PRO_0000275800" description="Photosystem II reaction center protein I">
    <location>
        <begin position="1"/>
        <end position="36"/>
    </location>
</feature>
<feature type="transmembrane region" description="Helical" evidence="1">
    <location>
        <begin position="4"/>
        <end position="24"/>
    </location>
</feature>